<proteinExistence type="inferred from homology"/>
<dbReference type="EC" id="4.6.1.12" evidence="1"/>
<dbReference type="EMBL" id="CP000094">
    <property type="protein sequence ID" value="ABA72870.1"/>
    <property type="molecule type" value="Genomic_DNA"/>
</dbReference>
<dbReference type="RefSeq" id="WP_007954821.1">
    <property type="nucleotide sequence ID" value="NC_007492.2"/>
</dbReference>
<dbReference type="SMR" id="Q3KH86"/>
<dbReference type="KEGG" id="pfo:Pfl01_1127"/>
<dbReference type="eggNOG" id="COG0245">
    <property type="taxonomic scope" value="Bacteria"/>
</dbReference>
<dbReference type="HOGENOM" id="CLU_084630_2_0_6"/>
<dbReference type="UniPathway" id="UPA00056">
    <property type="reaction ID" value="UER00095"/>
</dbReference>
<dbReference type="Proteomes" id="UP000002704">
    <property type="component" value="Chromosome"/>
</dbReference>
<dbReference type="GO" id="GO:0008685">
    <property type="term" value="F:2-C-methyl-D-erythritol 2,4-cyclodiphosphate synthase activity"/>
    <property type="evidence" value="ECO:0007669"/>
    <property type="project" value="UniProtKB-UniRule"/>
</dbReference>
<dbReference type="GO" id="GO:0046872">
    <property type="term" value="F:metal ion binding"/>
    <property type="evidence" value="ECO:0007669"/>
    <property type="project" value="UniProtKB-KW"/>
</dbReference>
<dbReference type="GO" id="GO:0019288">
    <property type="term" value="P:isopentenyl diphosphate biosynthetic process, methylerythritol 4-phosphate pathway"/>
    <property type="evidence" value="ECO:0007669"/>
    <property type="project" value="UniProtKB-UniRule"/>
</dbReference>
<dbReference type="GO" id="GO:0016114">
    <property type="term" value="P:terpenoid biosynthetic process"/>
    <property type="evidence" value="ECO:0007669"/>
    <property type="project" value="InterPro"/>
</dbReference>
<dbReference type="CDD" id="cd00554">
    <property type="entry name" value="MECDP_synthase"/>
    <property type="match status" value="1"/>
</dbReference>
<dbReference type="FunFam" id="3.30.1330.50:FF:000001">
    <property type="entry name" value="2-C-methyl-D-erythritol 2,4-cyclodiphosphate synthase"/>
    <property type="match status" value="1"/>
</dbReference>
<dbReference type="Gene3D" id="3.30.1330.50">
    <property type="entry name" value="2-C-methyl-D-erythritol 2,4-cyclodiphosphate synthase"/>
    <property type="match status" value="1"/>
</dbReference>
<dbReference type="HAMAP" id="MF_00107">
    <property type="entry name" value="IspF"/>
    <property type="match status" value="1"/>
</dbReference>
<dbReference type="InterPro" id="IPR003526">
    <property type="entry name" value="MECDP_synthase"/>
</dbReference>
<dbReference type="InterPro" id="IPR020555">
    <property type="entry name" value="MECDP_synthase_CS"/>
</dbReference>
<dbReference type="InterPro" id="IPR036571">
    <property type="entry name" value="MECDP_synthase_sf"/>
</dbReference>
<dbReference type="NCBIfam" id="TIGR00151">
    <property type="entry name" value="ispF"/>
    <property type="match status" value="1"/>
</dbReference>
<dbReference type="PANTHER" id="PTHR43181">
    <property type="entry name" value="2-C-METHYL-D-ERYTHRITOL 2,4-CYCLODIPHOSPHATE SYNTHASE, CHLOROPLASTIC"/>
    <property type="match status" value="1"/>
</dbReference>
<dbReference type="PANTHER" id="PTHR43181:SF1">
    <property type="entry name" value="2-C-METHYL-D-ERYTHRITOL 2,4-CYCLODIPHOSPHATE SYNTHASE, CHLOROPLASTIC"/>
    <property type="match status" value="1"/>
</dbReference>
<dbReference type="Pfam" id="PF02542">
    <property type="entry name" value="YgbB"/>
    <property type="match status" value="1"/>
</dbReference>
<dbReference type="SUPFAM" id="SSF69765">
    <property type="entry name" value="IpsF-like"/>
    <property type="match status" value="1"/>
</dbReference>
<dbReference type="PROSITE" id="PS01350">
    <property type="entry name" value="ISPF"/>
    <property type="match status" value="1"/>
</dbReference>
<protein>
    <recommendedName>
        <fullName evidence="1">2-C-methyl-D-erythritol 2,4-cyclodiphosphate synthase</fullName>
        <shortName evidence="1">MECDP-synthase</shortName>
        <shortName evidence="1">MECPP-synthase</shortName>
        <shortName evidence="1">MECPS</shortName>
        <ecNumber evidence="1">4.6.1.12</ecNumber>
    </recommendedName>
</protein>
<feature type="chain" id="PRO_0000237743" description="2-C-methyl-D-erythritol 2,4-cyclodiphosphate synthase">
    <location>
        <begin position="1"/>
        <end position="157"/>
    </location>
</feature>
<feature type="binding site" evidence="1">
    <location>
        <begin position="8"/>
        <end position="10"/>
    </location>
    <ligand>
        <name>4-CDP-2-C-methyl-D-erythritol 2-phosphate</name>
        <dbReference type="ChEBI" id="CHEBI:57919"/>
    </ligand>
</feature>
<feature type="binding site" evidence="1">
    <location>
        <position position="8"/>
    </location>
    <ligand>
        <name>a divalent metal cation</name>
        <dbReference type="ChEBI" id="CHEBI:60240"/>
    </ligand>
</feature>
<feature type="binding site" evidence="1">
    <location>
        <position position="10"/>
    </location>
    <ligand>
        <name>a divalent metal cation</name>
        <dbReference type="ChEBI" id="CHEBI:60240"/>
    </ligand>
</feature>
<feature type="binding site" evidence="1">
    <location>
        <begin position="34"/>
        <end position="35"/>
    </location>
    <ligand>
        <name>4-CDP-2-C-methyl-D-erythritol 2-phosphate</name>
        <dbReference type="ChEBI" id="CHEBI:57919"/>
    </ligand>
</feature>
<feature type="binding site" evidence="1">
    <location>
        <position position="42"/>
    </location>
    <ligand>
        <name>a divalent metal cation</name>
        <dbReference type="ChEBI" id="CHEBI:60240"/>
    </ligand>
</feature>
<feature type="binding site" evidence="1">
    <location>
        <begin position="56"/>
        <end position="58"/>
    </location>
    <ligand>
        <name>4-CDP-2-C-methyl-D-erythritol 2-phosphate</name>
        <dbReference type="ChEBI" id="CHEBI:57919"/>
    </ligand>
</feature>
<feature type="binding site" evidence="1">
    <location>
        <begin position="61"/>
        <end position="65"/>
    </location>
    <ligand>
        <name>4-CDP-2-C-methyl-D-erythritol 2-phosphate</name>
        <dbReference type="ChEBI" id="CHEBI:57919"/>
    </ligand>
</feature>
<feature type="binding site" evidence="1">
    <location>
        <begin position="100"/>
        <end position="106"/>
    </location>
    <ligand>
        <name>4-CDP-2-C-methyl-D-erythritol 2-phosphate</name>
        <dbReference type="ChEBI" id="CHEBI:57919"/>
    </ligand>
</feature>
<feature type="binding site" evidence="1">
    <location>
        <begin position="132"/>
        <end position="135"/>
    </location>
    <ligand>
        <name>4-CDP-2-C-methyl-D-erythritol 2-phosphate</name>
        <dbReference type="ChEBI" id="CHEBI:57919"/>
    </ligand>
</feature>
<feature type="binding site" evidence="1">
    <location>
        <position position="139"/>
    </location>
    <ligand>
        <name>4-CDP-2-C-methyl-D-erythritol 2-phosphate</name>
        <dbReference type="ChEBI" id="CHEBI:57919"/>
    </ligand>
</feature>
<feature type="binding site" evidence="1">
    <location>
        <position position="142"/>
    </location>
    <ligand>
        <name>4-CDP-2-C-methyl-D-erythritol 2-phosphate</name>
        <dbReference type="ChEBI" id="CHEBI:57919"/>
    </ligand>
</feature>
<feature type="site" description="Transition state stabilizer" evidence="1">
    <location>
        <position position="34"/>
    </location>
</feature>
<feature type="site" description="Transition state stabilizer" evidence="1">
    <location>
        <position position="133"/>
    </location>
</feature>
<comment type="function">
    <text evidence="1">Involved in the biosynthesis of isopentenyl diphosphate (IPP) and dimethylallyl diphosphate (DMAPP), two major building blocks of isoprenoid compounds. Catalyzes the conversion of 4-diphosphocytidyl-2-C-methyl-D-erythritol 2-phosphate (CDP-ME2P) to 2-C-methyl-D-erythritol 2,4-cyclodiphosphate (ME-CPP) with a corresponding release of cytidine 5-monophosphate (CMP).</text>
</comment>
<comment type="catalytic activity">
    <reaction evidence="1">
        <text>4-CDP-2-C-methyl-D-erythritol 2-phosphate = 2-C-methyl-D-erythritol 2,4-cyclic diphosphate + CMP</text>
        <dbReference type="Rhea" id="RHEA:23864"/>
        <dbReference type="ChEBI" id="CHEBI:57919"/>
        <dbReference type="ChEBI" id="CHEBI:58483"/>
        <dbReference type="ChEBI" id="CHEBI:60377"/>
        <dbReference type="EC" id="4.6.1.12"/>
    </reaction>
</comment>
<comment type="cofactor">
    <cofactor evidence="1">
        <name>a divalent metal cation</name>
        <dbReference type="ChEBI" id="CHEBI:60240"/>
    </cofactor>
    <text evidence="1">Binds 1 divalent metal cation per subunit.</text>
</comment>
<comment type="pathway">
    <text evidence="1">Isoprenoid biosynthesis; isopentenyl diphosphate biosynthesis via DXP pathway; isopentenyl diphosphate from 1-deoxy-D-xylulose 5-phosphate: step 4/6.</text>
</comment>
<comment type="subunit">
    <text evidence="1">Homotrimer.</text>
</comment>
<comment type="similarity">
    <text evidence="1">Belongs to the IspF family.</text>
</comment>
<accession>Q3KH86</accession>
<reference key="1">
    <citation type="journal article" date="2009" name="Genome Biol.">
        <title>Genomic and genetic analyses of diversity and plant interactions of Pseudomonas fluorescens.</title>
        <authorList>
            <person name="Silby M.W."/>
            <person name="Cerdeno-Tarraga A.M."/>
            <person name="Vernikos G.S."/>
            <person name="Giddens S.R."/>
            <person name="Jackson R.W."/>
            <person name="Preston G.M."/>
            <person name="Zhang X.-X."/>
            <person name="Moon C.D."/>
            <person name="Gehrig S.M."/>
            <person name="Godfrey S.A.C."/>
            <person name="Knight C.G."/>
            <person name="Malone J.G."/>
            <person name="Robinson Z."/>
            <person name="Spiers A.J."/>
            <person name="Harris S."/>
            <person name="Challis G.L."/>
            <person name="Yaxley A.M."/>
            <person name="Harris D."/>
            <person name="Seeger K."/>
            <person name="Murphy L."/>
            <person name="Rutter S."/>
            <person name="Squares R."/>
            <person name="Quail M.A."/>
            <person name="Saunders E."/>
            <person name="Mavromatis K."/>
            <person name="Brettin T.S."/>
            <person name="Bentley S.D."/>
            <person name="Hothersall J."/>
            <person name="Stephens E."/>
            <person name="Thomas C.M."/>
            <person name="Parkhill J."/>
            <person name="Levy S.B."/>
            <person name="Rainey P.B."/>
            <person name="Thomson N.R."/>
        </authorList>
    </citation>
    <scope>NUCLEOTIDE SEQUENCE [LARGE SCALE GENOMIC DNA]</scope>
    <source>
        <strain>Pf0-1</strain>
    </source>
</reference>
<name>ISPF_PSEPF</name>
<keyword id="KW-0414">Isoprene biosynthesis</keyword>
<keyword id="KW-0456">Lyase</keyword>
<keyword id="KW-0479">Metal-binding</keyword>
<gene>
    <name evidence="1" type="primary">ispF</name>
    <name type="ordered locus">Pfl01_1127</name>
</gene>
<evidence type="ECO:0000255" key="1">
    <source>
        <dbReference type="HAMAP-Rule" id="MF_00107"/>
    </source>
</evidence>
<organism>
    <name type="scientific">Pseudomonas fluorescens (strain Pf0-1)</name>
    <dbReference type="NCBI Taxonomy" id="205922"/>
    <lineage>
        <taxon>Bacteria</taxon>
        <taxon>Pseudomonadati</taxon>
        <taxon>Pseudomonadota</taxon>
        <taxon>Gammaproteobacteria</taxon>
        <taxon>Pseudomonadales</taxon>
        <taxon>Pseudomonadaceae</taxon>
        <taxon>Pseudomonas</taxon>
    </lineage>
</organism>
<sequence length="157" mass="16737">MRIGHGYDVHRFAEGDFITLGGVRIAHGFGLLAHSDGDVLLHALSDALLGAAALGDIGKHFPDTDPQFKGADSRVLLRHVVSLIHAKGWKVGNVDNTIVAQAPKMAPHIESMRALIAADLQVELDQVNVKATTTEKLGFVGREEGIAVHSVALLLRA</sequence>